<gene>
    <name evidence="1" type="primary">tatA</name>
    <name type="ordered locus">Plut_1611</name>
</gene>
<comment type="function">
    <text evidence="1">Part of the twin-arginine translocation (Tat) system that transports large folded proteins containing a characteristic twin-arginine motif in their signal peptide across membranes. TatA could form the protein-conducting channel of the Tat system.</text>
</comment>
<comment type="subunit">
    <text evidence="1">Forms a complex with TatC.</text>
</comment>
<comment type="subcellular location">
    <subcellularLocation>
        <location evidence="1">Cell inner membrane</location>
        <topology evidence="1">Single-pass membrane protein</topology>
    </subcellularLocation>
</comment>
<comment type="similarity">
    <text evidence="1">Belongs to the TatA/E family.</text>
</comment>
<feature type="chain" id="PRO_1000078311" description="Sec-independent protein translocase protein TatA">
    <location>
        <begin position="1"/>
        <end position="69"/>
    </location>
</feature>
<feature type="transmembrane region" description="Helical" evidence="1">
    <location>
        <begin position="1"/>
        <end position="21"/>
    </location>
</feature>
<feature type="region of interest" description="Disordered" evidence="2">
    <location>
        <begin position="49"/>
        <end position="69"/>
    </location>
</feature>
<protein>
    <recommendedName>
        <fullName evidence="1">Sec-independent protein translocase protein TatA</fullName>
    </recommendedName>
</protein>
<name>TATA_CHLL3</name>
<sequence>MFGLGGQELILILMIILLLFGAKKLPELAKGLGKGMKEFKKAQNEMEDEFNKAMDDETPKKKDFGPDRE</sequence>
<keyword id="KW-0997">Cell inner membrane</keyword>
<keyword id="KW-1003">Cell membrane</keyword>
<keyword id="KW-0472">Membrane</keyword>
<keyword id="KW-0653">Protein transport</keyword>
<keyword id="KW-1185">Reference proteome</keyword>
<keyword id="KW-0811">Translocation</keyword>
<keyword id="KW-0812">Transmembrane</keyword>
<keyword id="KW-1133">Transmembrane helix</keyword>
<keyword id="KW-0813">Transport</keyword>
<reference key="1">
    <citation type="submission" date="2005-08" db="EMBL/GenBank/DDBJ databases">
        <title>Complete sequence of Pelodictyon luteolum DSM 273.</title>
        <authorList>
            <consortium name="US DOE Joint Genome Institute"/>
            <person name="Copeland A."/>
            <person name="Lucas S."/>
            <person name="Lapidus A."/>
            <person name="Barry K."/>
            <person name="Detter J.C."/>
            <person name="Glavina T."/>
            <person name="Hammon N."/>
            <person name="Israni S."/>
            <person name="Pitluck S."/>
            <person name="Bryant D."/>
            <person name="Schmutz J."/>
            <person name="Larimer F."/>
            <person name="Land M."/>
            <person name="Kyrpides N."/>
            <person name="Ivanova N."/>
            <person name="Richardson P."/>
        </authorList>
    </citation>
    <scope>NUCLEOTIDE SEQUENCE [LARGE SCALE GENOMIC DNA]</scope>
    <source>
        <strain>DSM 273 / BCRC 81028 / 2530</strain>
    </source>
</reference>
<proteinExistence type="inferred from homology"/>
<accession>Q3B2G6</accession>
<organism>
    <name type="scientific">Chlorobium luteolum (strain DSM 273 / BCRC 81028 / 2530)</name>
    <name type="common">Pelodictyon luteolum</name>
    <dbReference type="NCBI Taxonomy" id="319225"/>
    <lineage>
        <taxon>Bacteria</taxon>
        <taxon>Pseudomonadati</taxon>
        <taxon>Chlorobiota</taxon>
        <taxon>Chlorobiia</taxon>
        <taxon>Chlorobiales</taxon>
        <taxon>Chlorobiaceae</taxon>
        <taxon>Chlorobium/Pelodictyon group</taxon>
        <taxon>Pelodictyon</taxon>
    </lineage>
</organism>
<dbReference type="EMBL" id="CP000096">
    <property type="protein sequence ID" value="ABB24465.1"/>
    <property type="molecule type" value="Genomic_DNA"/>
</dbReference>
<dbReference type="RefSeq" id="WP_011358337.1">
    <property type="nucleotide sequence ID" value="NC_007512.1"/>
</dbReference>
<dbReference type="SMR" id="Q3B2G6"/>
<dbReference type="STRING" id="319225.Plut_1611"/>
<dbReference type="KEGG" id="plt:Plut_1611"/>
<dbReference type="eggNOG" id="COG1826">
    <property type="taxonomic scope" value="Bacteria"/>
</dbReference>
<dbReference type="HOGENOM" id="CLU_086034_6_2_10"/>
<dbReference type="OrthoDB" id="9812812at2"/>
<dbReference type="Proteomes" id="UP000002709">
    <property type="component" value="Chromosome"/>
</dbReference>
<dbReference type="GO" id="GO:0033281">
    <property type="term" value="C:TAT protein transport complex"/>
    <property type="evidence" value="ECO:0007669"/>
    <property type="project" value="UniProtKB-UniRule"/>
</dbReference>
<dbReference type="GO" id="GO:0008320">
    <property type="term" value="F:protein transmembrane transporter activity"/>
    <property type="evidence" value="ECO:0007669"/>
    <property type="project" value="UniProtKB-UniRule"/>
</dbReference>
<dbReference type="GO" id="GO:0043953">
    <property type="term" value="P:protein transport by the Tat complex"/>
    <property type="evidence" value="ECO:0007669"/>
    <property type="project" value="UniProtKB-UniRule"/>
</dbReference>
<dbReference type="Gene3D" id="1.20.5.3310">
    <property type="match status" value="1"/>
</dbReference>
<dbReference type="HAMAP" id="MF_00236">
    <property type="entry name" value="TatA_E"/>
    <property type="match status" value="1"/>
</dbReference>
<dbReference type="InterPro" id="IPR003369">
    <property type="entry name" value="TatA/B/E"/>
</dbReference>
<dbReference type="InterPro" id="IPR006312">
    <property type="entry name" value="TatA/E"/>
</dbReference>
<dbReference type="NCBIfam" id="NF011430">
    <property type="entry name" value="PRK14861.1"/>
    <property type="match status" value="1"/>
</dbReference>
<dbReference type="NCBIfam" id="TIGR01411">
    <property type="entry name" value="tatAE"/>
    <property type="match status" value="1"/>
</dbReference>
<dbReference type="PANTHER" id="PTHR42982">
    <property type="entry name" value="SEC-INDEPENDENT PROTEIN TRANSLOCASE PROTEIN TATA"/>
    <property type="match status" value="1"/>
</dbReference>
<dbReference type="PANTHER" id="PTHR42982:SF1">
    <property type="entry name" value="SEC-INDEPENDENT PROTEIN TRANSLOCASE PROTEIN TATA"/>
    <property type="match status" value="1"/>
</dbReference>
<dbReference type="Pfam" id="PF02416">
    <property type="entry name" value="TatA_B_E"/>
    <property type="match status" value="1"/>
</dbReference>
<dbReference type="PRINTS" id="PR01506">
    <property type="entry name" value="TATBPROTEIN"/>
</dbReference>
<evidence type="ECO:0000255" key="1">
    <source>
        <dbReference type="HAMAP-Rule" id="MF_00236"/>
    </source>
</evidence>
<evidence type="ECO:0000256" key="2">
    <source>
        <dbReference type="SAM" id="MobiDB-lite"/>
    </source>
</evidence>